<evidence type="ECO:0000255" key="1">
    <source>
        <dbReference type="HAMAP-Rule" id="MF_01872"/>
    </source>
</evidence>
<name>TRMN6_EDWI9</name>
<proteinExistence type="inferred from homology"/>
<reference key="1">
    <citation type="submission" date="2009-03" db="EMBL/GenBank/DDBJ databases">
        <title>Complete genome sequence of Edwardsiella ictaluri 93-146.</title>
        <authorList>
            <person name="Williams M.L."/>
            <person name="Gillaspy A.F."/>
            <person name="Dyer D.W."/>
            <person name="Thune R.L."/>
            <person name="Waldbieser G.C."/>
            <person name="Schuster S.C."/>
            <person name="Gipson J."/>
            <person name="Zaitshik J."/>
            <person name="Landry C."/>
            <person name="Lawrence M.L."/>
        </authorList>
    </citation>
    <scope>NUCLEOTIDE SEQUENCE [LARGE SCALE GENOMIC DNA]</scope>
    <source>
        <strain>93-146</strain>
    </source>
</reference>
<protein>
    <recommendedName>
        <fullName evidence="1">tRNA1(Val) (adenine(37)-N6)-methyltransferase</fullName>
        <ecNumber evidence="1">2.1.1.223</ecNumber>
    </recommendedName>
    <alternativeName>
        <fullName evidence="1">tRNA m6A37 methyltransferase</fullName>
    </alternativeName>
</protein>
<organism>
    <name type="scientific">Edwardsiella ictaluri (strain 93-146)</name>
    <dbReference type="NCBI Taxonomy" id="634503"/>
    <lineage>
        <taxon>Bacteria</taxon>
        <taxon>Pseudomonadati</taxon>
        <taxon>Pseudomonadota</taxon>
        <taxon>Gammaproteobacteria</taxon>
        <taxon>Enterobacterales</taxon>
        <taxon>Hafniaceae</taxon>
        <taxon>Edwardsiella</taxon>
    </lineage>
</organism>
<gene>
    <name type="ordered locus">NT01EI_3041</name>
</gene>
<sequence length="247" mass="27200">MPHPPSAALSLPRNGFTLKRFFVAHDRCEMKVGTDSIMLGAWLPLRGDERHILDIGSGSGVLALMMAQRSTAQVDGVEIEPGAATQGQENFLASPWPTRLTMHTLSLQAFSAGCGRRYDLIVSNPPYFAPGVACRTAARATARYTDSLDHAALLRHAAELSCEDGRLALVLPVEAAESVVSKGMTHGWHLLRRTAVRDRADKPVRRTLLLFGRIPAAVQSNTLDIRDDSSEYSCIFRNMTKDFYLFF</sequence>
<keyword id="KW-0963">Cytoplasm</keyword>
<keyword id="KW-0489">Methyltransferase</keyword>
<keyword id="KW-0949">S-adenosyl-L-methionine</keyword>
<keyword id="KW-0808">Transferase</keyword>
<keyword id="KW-0819">tRNA processing</keyword>
<dbReference type="EC" id="2.1.1.223" evidence="1"/>
<dbReference type="EMBL" id="CP001600">
    <property type="protein sequence ID" value="ACR70193.1"/>
    <property type="molecule type" value="Genomic_DNA"/>
</dbReference>
<dbReference type="RefSeq" id="WP_015872282.1">
    <property type="nucleotide sequence ID" value="NZ_CP169062.1"/>
</dbReference>
<dbReference type="SMR" id="C5BAI6"/>
<dbReference type="STRING" id="67780.B6E78_07070"/>
<dbReference type="KEGG" id="eic:NT01EI_3041"/>
<dbReference type="PATRIC" id="fig|634503.3.peg.2720"/>
<dbReference type="HOGENOM" id="CLU_061983_0_0_6"/>
<dbReference type="OrthoDB" id="5383291at2"/>
<dbReference type="Proteomes" id="UP000001485">
    <property type="component" value="Chromosome"/>
</dbReference>
<dbReference type="GO" id="GO:0005737">
    <property type="term" value="C:cytoplasm"/>
    <property type="evidence" value="ECO:0007669"/>
    <property type="project" value="UniProtKB-SubCell"/>
</dbReference>
<dbReference type="GO" id="GO:0003676">
    <property type="term" value="F:nucleic acid binding"/>
    <property type="evidence" value="ECO:0007669"/>
    <property type="project" value="InterPro"/>
</dbReference>
<dbReference type="GO" id="GO:0016430">
    <property type="term" value="F:tRNA (adenine-N6)-methyltransferase activity"/>
    <property type="evidence" value="ECO:0007669"/>
    <property type="project" value="UniProtKB-UniRule"/>
</dbReference>
<dbReference type="GO" id="GO:0032259">
    <property type="term" value="P:methylation"/>
    <property type="evidence" value="ECO:0007669"/>
    <property type="project" value="UniProtKB-KW"/>
</dbReference>
<dbReference type="GO" id="GO:0008033">
    <property type="term" value="P:tRNA processing"/>
    <property type="evidence" value="ECO:0007669"/>
    <property type="project" value="UniProtKB-UniRule"/>
</dbReference>
<dbReference type="CDD" id="cd02440">
    <property type="entry name" value="AdoMet_MTases"/>
    <property type="match status" value="1"/>
</dbReference>
<dbReference type="Gene3D" id="3.40.50.150">
    <property type="entry name" value="Vaccinia Virus protein VP39"/>
    <property type="match status" value="1"/>
</dbReference>
<dbReference type="HAMAP" id="MF_01872">
    <property type="entry name" value="tRNA_methyltr_YfiC"/>
    <property type="match status" value="1"/>
</dbReference>
<dbReference type="InterPro" id="IPR002052">
    <property type="entry name" value="DNA_methylase_N6_adenine_CS"/>
</dbReference>
<dbReference type="InterPro" id="IPR029063">
    <property type="entry name" value="SAM-dependent_MTases_sf"/>
</dbReference>
<dbReference type="InterPro" id="IPR007848">
    <property type="entry name" value="Small_mtfrase_dom"/>
</dbReference>
<dbReference type="InterPro" id="IPR050210">
    <property type="entry name" value="tRNA_Adenine-N(6)_MTase"/>
</dbReference>
<dbReference type="InterPro" id="IPR022882">
    <property type="entry name" value="tRNA_adenine-N6_MeTrfase"/>
</dbReference>
<dbReference type="PANTHER" id="PTHR47739">
    <property type="entry name" value="TRNA1(VAL) (ADENINE(37)-N6)-METHYLTRANSFERASE"/>
    <property type="match status" value="1"/>
</dbReference>
<dbReference type="PANTHER" id="PTHR47739:SF1">
    <property type="entry name" value="TRNA1(VAL) (ADENINE(37)-N6)-METHYLTRANSFERASE"/>
    <property type="match status" value="1"/>
</dbReference>
<dbReference type="Pfam" id="PF05175">
    <property type="entry name" value="MTS"/>
    <property type="match status" value="1"/>
</dbReference>
<dbReference type="PRINTS" id="PR00507">
    <property type="entry name" value="N12N6MTFRASE"/>
</dbReference>
<dbReference type="SUPFAM" id="SSF53335">
    <property type="entry name" value="S-adenosyl-L-methionine-dependent methyltransferases"/>
    <property type="match status" value="1"/>
</dbReference>
<dbReference type="PROSITE" id="PS00092">
    <property type="entry name" value="N6_MTASE"/>
    <property type="match status" value="1"/>
</dbReference>
<accession>C5BAI6</accession>
<feature type="chain" id="PRO_0000387350" description="tRNA1(Val) (adenine(37)-N6)-methyltransferase">
    <location>
        <begin position="1"/>
        <end position="247"/>
    </location>
</feature>
<comment type="function">
    <text evidence="1">Specifically methylates the adenine in position 37 of tRNA(1)(Val) (anticodon cmo5UAC).</text>
</comment>
<comment type="catalytic activity">
    <reaction evidence="1">
        <text>adenosine(37) in tRNA1(Val) + S-adenosyl-L-methionine = N(6)-methyladenosine(37) in tRNA1(Val) + S-adenosyl-L-homocysteine + H(+)</text>
        <dbReference type="Rhea" id="RHEA:43160"/>
        <dbReference type="Rhea" id="RHEA-COMP:10369"/>
        <dbReference type="Rhea" id="RHEA-COMP:10370"/>
        <dbReference type="ChEBI" id="CHEBI:15378"/>
        <dbReference type="ChEBI" id="CHEBI:57856"/>
        <dbReference type="ChEBI" id="CHEBI:59789"/>
        <dbReference type="ChEBI" id="CHEBI:74411"/>
        <dbReference type="ChEBI" id="CHEBI:74449"/>
        <dbReference type="EC" id="2.1.1.223"/>
    </reaction>
</comment>
<comment type="subcellular location">
    <subcellularLocation>
        <location evidence="1">Cytoplasm</location>
    </subcellularLocation>
</comment>
<comment type="similarity">
    <text evidence="1">Belongs to the methyltransferase superfamily. tRNA (adenine-N(6)-)-methyltransferase family.</text>
</comment>